<feature type="chain" id="PRO_1000063979" description="2,3-bisphosphoglycerate-independent phosphoglycerate mutase">
    <location>
        <begin position="1"/>
        <end position="514"/>
    </location>
</feature>
<feature type="active site" description="Phosphoserine intermediate" evidence="1">
    <location>
        <position position="63"/>
    </location>
</feature>
<feature type="binding site" evidence="1">
    <location>
        <position position="13"/>
    </location>
    <ligand>
        <name>Mn(2+)</name>
        <dbReference type="ChEBI" id="CHEBI:29035"/>
        <label>2</label>
    </ligand>
</feature>
<feature type="binding site" evidence="1">
    <location>
        <position position="63"/>
    </location>
    <ligand>
        <name>Mn(2+)</name>
        <dbReference type="ChEBI" id="CHEBI:29035"/>
        <label>2</label>
    </ligand>
</feature>
<feature type="binding site" evidence="1">
    <location>
        <position position="124"/>
    </location>
    <ligand>
        <name>substrate</name>
    </ligand>
</feature>
<feature type="binding site" evidence="1">
    <location>
        <begin position="154"/>
        <end position="155"/>
    </location>
    <ligand>
        <name>substrate</name>
    </ligand>
</feature>
<feature type="binding site" evidence="1">
    <location>
        <position position="186"/>
    </location>
    <ligand>
        <name>substrate</name>
    </ligand>
</feature>
<feature type="binding site" evidence="1">
    <location>
        <position position="192"/>
    </location>
    <ligand>
        <name>substrate</name>
    </ligand>
</feature>
<feature type="binding site" evidence="1">
    <location>
        <begin position="258"/>
        <end position="261"/>
    </location>
    <ligand>
        <name>substrate</name>
    </ligand>
</feature>
<feature type="binding site" evidence="1">
    <location>
        <position position="332"/>
    </location>
    <ligand>
        <name>substrate</name>
    </ligand>
</feature>
<feature type="binding site" evidence="1">
    <location>
        <position position="399"/>
    </location>
    <ligand>
        <name>Mn(2+)</name>
        <dbReference type="ChEBI" id="CHEBI:29035"/>
        <label>1</label>
    </ligand>
</feature>
<feature type="binding site" evidence="1">
    <location>
        <position position="403"/>
    </location>
    <ligand>
        <name>Mn(2+)</name>
        <dbReference type="ChEBI" id="CHEBI:29035"/>
        <label>1</label>
    </ligand>
</feature>
<feature type="binding site" evidence="1">
    <location>
        <position position="440"/>
    </location>
    <ligand>
        <name>Mn(2+)</name>
        <dbReference type="ChEBI" id="CHEBI:29035"/>
        <label>2</label>
    </ligand>
</feature>
<feature type="binding site" evidence="1">
    <location>
        <position position="441"/>
    </location>
    <ligand>
        <name>Mn(2+)</name>
        <dbReference type="ChEBI" id="CHEBI:29035"/>
        <label>2</label>
    </ligand>
</feature>
<feature type="binding site" evidence="1">
    <location>
        <position position="459"/>
    </location>
    <ligand>
        <name>Mn(2+)</name>
        <dbReference type="ChEBI" id="CHEBI:29035"/>
        <label>1</label>
    </ligand>
</feature>
<keyword id="KW-0324">Glycolysis</keyword>
<keyword id="KW-0413">Isomerase</keyword>
<keyword id="KW-0464">Manganese</keyword>
<keyword id="KW-0479">Metal-binding</keyword>
<name>GPMI_LEGPC</name>
<sequence>MSHNAPLVLMILDGWGYNENDRYNAIAKANTPQWDEWWQTCPHILLKASGLPVGLPDEQMGNSEVGHMHIGAGRVIQQDFTRINEAINNGKFAKNAVFHEVIDQLKKTEKSLHIMGLLSPGGVHSHEQHLFALLALCNQKKFRSVHLHLFLDGRDTPPQSALDSLKCLNEELVKHPVATINSICGRYYAMDRDKRWERVEPVYNLLTQGKSEHQFPDAETAIHFYYKNKISDEFVPPTLIGKEHSIQDGDAVLFFNFRADRARQLTSTFLDPLFKGFERKTLPKLSYFVSMTQYDKNLITTIAFPPVPLNNTLGEVLSSHGLSQLRIAETEKYAHVTFFFNGGCESVFTNEERIMVPSPQVATYDLQPEMSAPELTKTLIAAINSRDYHVIICNYANADMVGHTGNFEATVQAIECLDQCMHQVWQALKNNGGKLLITADHGNAEEMFSEATNQAHTAHTSEPVPFLYVGGGWHFTHAEGSLIDIAPSLLALLGITPPPEMTGRILLEKNHAHV</sequence>
<accession>A5IH96</accession>
<evidence type="ECO:0000255" key="1">
    <source>
        <dbReference type="HAMAP-Rule" id="MF_01038"/>
    </source>
</evidence>
<gene>
    <name evidence="1" type="primary">gpmI</name>
    <name type="ordered locus">LPC_2845</name>
</gene>
<organism>
    <name type="scientific">Legionella pneumophila (strain Corby)</name>
    <dbReference type="NCBI Taxonomy" id="400673"/>
    <lineage>
        <taxon>Bacteria</taxon>
        <taxon>Pseudomonadati</taxon>
        <taxon>Pseudomonadota</taxon>
        <taxon>Gammaproteobacteria</taxon>
        <taxon>Legionellales</taxon>
        <taxon>Legionellaceae</taxon>
        <taxon>Legionella</taxon>
    </lineage>
</organism>
<proteinExistence type="inferred from homology"/>
<dbReference type="EC" id="5.4.2.12" evidence="1"/>
<dbReference type="EMBL" id="CP000675">
    <property type="protein sequence ID" value="ABQ56746.1"/>
    <property type="molecule type" value="Genomic_DNA"/>
</dbReference>
<dbReference type="RefSeq" id="WP_011945657.1">
    <property type="nucleotide sequence ID" value="NC_009494.2"/>
</dbReference>
<dbReference type="SMR" id="A5IH96"/>
<dbReference type="KEGG" id="lpc:LPC_2845"/>
<dbReference type="HOGENOM" id="CLU_026099_2_0_6"/>
<dbReference type="UniPathway" id="UPA00109">
    <property type="reaction ID" value="UER00186"/>
</dbReference>
<dbReference type="GO" id="GO:0005829">
    <property type="term" value="C:cytosol"/>
    <property type="evidence" value="ECO:0007669"/>
    <property type="project" value="TreeGrafter"/>
</dbReference>
<dbReference type="GO" id="GO:0030145">
    <property type="term" value="F:manganese ion binding"/>
    <property type="evidence" value="ECO:0007669"/>
    <property type="project" value="UniProtKB-UniRule"/>
</dbReference>
<dbReference type="GO" id="GO:0004619">
    <property type="term" value="F:phosphoglycerate mutase activity"/>
    <property type="evidence" value="ECO:0007669"/>
    <property type="project" value="UniProtKB-EC"/>
</dbReference>
<dbReference type="GO" id="GO:0006007">
    <property type="term" value="P:glucose catabolic process"/>
    <property type="evidence" value="ECO:0007669"/>
    <property type="project" value="InterPro"/>
</dbReference>
<dbReference type="GO" id="GO:0006096">
    <property type="term" value="P:glycolytic process"/>
    <property type="evidence" value="ECO:0007669"/>
    <property type="project" value="UniProtKB-UniRule"/>
</dbReference>
<dbReference type="CDD" id="cd16010">
    <property type="entry name" value="iPGM"/>
    <property type="match status" value="1"/>
</dbReference>
<dbReference type="FunFam" id="3.40.1450.10:FF:000002">
    <property type="entry name" value="2,3-bisphosphoglycerate-independent phosphoglycerate mutase"/>
    <property type="match status" value="1"/>
</dbReference>
<dbReference type="Gene3D" id="3.40.720.10">
    <property type="entry name" value="Alkaline Phosphatase, subunit A"/>
    <property type="match status" value="1"/>
</dbReference>
<dbReference type="Gene3D" id="3.40.1450.10">
    <property type="entry name" value="BPG-independent phosphoglycerate mutase, domain B"/>
    <property type="match status" value="1"/>
</dbReference>
<dbReference type="HAMAP" id="MF_01038">
    <property type="entry name" value="GpmI"/>
    <property type="match status" value="1"/>
</dbReference>
<dbReference type="InterPro" id="IPR017850">
    <property type="entry name" value="Alkaline_phosphatase_core_sf"/>
</dbReference>
<dbReference type="InterPro" id="IPR011258">
    <property type="entry name" value="BPG-indep_PGM_N"/>
</dbReference>
<dbReference type="InterPro" id="IPR006124">
    <property type="entry name" value="Metalloenzyme"/>
</dbReference>
<dbReference type="InterPro" id="IPR036646">
    <property type="entry name" value="PGAM_B_sf"/>
</dbReference>
<dbReference type="InterPro" id="IPR005995">
    <property type="entry name" value="Pgm_bpd_ind"/>
</dbReference>
<dbReference type="NCBIfam" id="TIGR01307">
    <property type="entry name" value="pgm_bpd_ind"/>
    <property type="match status" value="1"/>
</dbReference>
<dbReference type="PANTHER" id="PTHR31637">
    <property type="entry name" value="2,3-BISPHOSPHOGLYCERATE-INDEPENDENT PHOSPHOGLYCERATE MUTASE"/>
    <property type="match status" value="1"/>
</dbReference>
<dbReference type="PANTHER" id="PTHR31637:SF0">
    <property type="entry name" value="2,3-BISPHOSPHOGLYCERATE-INDEPENDENT PHOSPHOGLYCERATE MUTASE"/>
    <property type="match status" value="1"/>
</dbReference>
<dbReference type="Pfam" id="PF06415">
    <property type="entry name" value="iPGM_N"/>
    <property type="match status" value="1"/>
</dbReference>
<dbReference type="Pfam" id="PF01676">
    <property type="entry name" value="Metalloenzyme"/>
    <property type="match status" value="1"/>
</dbReference>
<dbReference type="PIRSF" id="PIRSF001492">
    <property type="entry name" value="IPGAM"/>
    <property type="match status" value="1"/>
</dbReference>
<dbReference type="SUPFAM" id="SSF64158">
    <property type="entry name" value="2,3-Bisphosphoglycerate-independent phosphoglycerate mutase, substrate-binding domain"/>
    <property type="match status" value="1"/>
</dbReference>
<dbReference type="SUPFAM" id="SSF53649">
    <property type="entry name" value="Alkaline phosphatase-like"/>
    <property type="match status" value="1"/>
</dbReference>
<protein>
    <recommendedName>
        <fullName evidence="1">2,3-bisphosphoglycerate-independent phosphoglycerate mutase</fullName>
        <shortName evidence="1">BPG-independent PGAM</shortName>
        <shortName evidence="1">Phosphoglyceromutase</shortName>
        <shortName evidence="1">iPGM</shortName>
        <ecNumber evidence="1">5.4.2.12</ecNumber>
    </recommendedName>
</protein>
<reference key="1">
    <citation type="submission" date="2006-11" db="EMBL/GenBank/DDBJ databases">
        <title>Identification and characterization of a new conjugation/ type IVA secretion system (trb/tra) of L. pneumophila Corby localized on a mobile genomic island.</title>
        <authorList>
            <person name="Gloeckner G."/>
            <person name="Albert-Weissenberger C."/>
            <person name="Weinmann E."/>
            <person name="Jacobi S."/>
            <person name="Schunder E."/>
            <person name="Steinert M."/>
            <person name="Buchrieser C."/>
            <person name="Hacker J."/>
            <person name="Heuner K."/>
        </authorList>
    </citation>
    <scope>NUCLEOTIDE SEQUENCE [LARGE SCALE GENOMIC DNA]</scope>
    <source>
        <strain>Corby</strain>
    </source>
</reference>
<comment type="function">
    <text evidence="1">Catalyzes the interconversion of 2-phosphoglycerate and 3-phosphoglycerate.</text>
</comment>
<comment type="catalytic activity">
    <reaction evidence="1">
        <text>(2R)-2-phosphoglycerate = (2R)-3-phosphoglycerate</text>
        <dbReference type="Rhea" id="RHEA:15901"/>
        <dbReference type="ChEBI" id="CHEBI:58272"/>
        <dbReference type="ChEBI" id="CHEBI:58289"/>
        <dbReference type="EC" id="5.4.2.12"/>
    </reaction>
</comment>
<comment type="cofactor">
    <cofactor evidence="1">
        <name>Mn(2+)</name>
        <dbReference type="ChEBI" id="CHEBI:29035"/>
    </cofactor>
    <text evidence="1">Binds 2 manganese ions per subunit.</text>
</comment>
<comment type="pathway">
    <text evidence="1">Carbohydrate degradation; glycolysis; pyruvate from D-glyceraldehyde 3-phosphate: step 3/5.</text>
</comment>
<comment type="subunit">
    <text evidence="1">Monomer.</text>
</comment>
<comment type="similarity">
    <text evidence="1">Belongs to the BPG-independent phosphoglycerate mutase family.</text>
</comment>